<sequence>MTIKIQFKQTLGETNFDIDLSLPRNEISALFGRSGAGKTTLINVISGLVTPQQGRIAIGDHVLFDSEQGINLPTHKRKIGYVFQDSRLFPHYSVQGNLLYGVKEKDDAYFDAVTDLLSIKPLLKRFPISLSGGEKQRVAIARALLSKPDLLLMDEPLASLDMPRKREVMPFLEELSDKVNIPIIYVTHSLQEILRLAQHLAIIDKGQVTTSGKLEEVWASHAMRPWQSFSDQSSLFEGKIEAHHSQYALTRVKLAPNASLWVQKIDGEPDTPIRLQVRANDVSIALEQPKATSIRNVLPAEVHSIEAFNAGDDKQSINVSLQLDDGCYLWATITPWALDDLNLKVGDKVYAQVKGVSVTQRDVALAPH</sequence>
<accession>Q87HN4</accession>
<organism>
    <name type="scientific">Vibrio parahaemolyticus serotype O3:K6 (strain RIMD 2210633)</name>
    <dbReference type="NCBI Taxonomy" id="223926"/>
    <lineage>
        <taxon>Bacteria</taxon>
        <taxon>Pseudomonadati</taxon>
        <taxon>Pseudomonadota</taxon>
        <taxon>Gammaproteobacteria</taxon>
        <taxon>Vibrionales</taxon>
        <taxon>Vibrionaceae</taxon>
        <taxon>Vibrio</taxon>
    </lineage>
</organism>
<keyword id="KW-0067">ATP-binding</keyword>
<keyword id="KW-0997">Cell inner membrane</keyword>
<keyword id="KW-1003">Cell membrane</keyword>
<keyword id="KW-0472">Membrane</keyword>
<keyword id="KW-0500">Molybdenum</keyword>
<keyword id="KW-0547">Nucleotide-binding</keyword>
<keyword id="KW-1278">Translocase</keyword>
<keyword id="KW-0813">Transport</keyword>
<comment type="function">
    <text evidence="1">Part of the ABC transporter complex ModABC involved in molybdenum import. Responsible for energy coupling to the transport system.</text>
</comment>
<comment type="catalytic activity">
    <reaction evidence="1">
        <text>molybdate(out) + ATP + H2O = molybdate(in) + ADP + phosphate + H(+)</text>
        <dbReference type="Rhea" id="RHEA:22020"/>
        <dbReference type="ChEBI" id="CHEBI:15377"/>
        <dbReference type="ChEBI" id="CHEBI:15378"/>
        <dbReference type="ChEBI" id="CHEBI:30616"/>
        <dbReference type="ChEBI" id="CHEBI:36264"/>
        <dbReference type="ChEBI" id="CHEBI:43474"/>
        <dbReference type="ChEBI" id="CHEBI:456216"/>
        <dbReference type="EC" id="7.3.2.5"/>
    </reaction>
</comment>
<comment type="subunit">
    <text evidence="1">The complex is composed of two ATP-binding proteins (ModC), two transmembrane proteins (ModB) and a solute-binding protein (ModA).</text>
</comment>
<comment type="subcellular location">
    <subcellularLocation>
        <location evidence="1">Cell inner membrane</location>
        <topology evidence="1">Peripheral membrane protein</topology>
    </subcellularLocation>
</comment>
<comment type="similarity">
    <text evidence="1">Belongs to the ABC transporter superfamily. Molybdate importer (TC 3.A.1.8) family.</text>
</comment>
<feature type="chain" id="PRO_0000092560" description="Molybdenum import ATP-binding protein ModC">
    <location>
        <begin position="1"/>
        <end position="368"/>
    </location>
</feature>
<feature type="domain" description="ABC transporter" evidence="1">
    <location>
        <begin position="1"/>
        <end position="230"/>
    </location>
</feature>
<feature type="domain" description="Mop" evidence="2">
    <location>
        <begin position="291"/>
        <end position="362"/>
    </location>
</feature>
<feature type="binding site" evidence="1">
    <location>
        <begin position="32"/>
        <end position="39"/>
    </location>
    <ligand>
        <name>ATP</name>
        <dbReference type="ChEBI" id="CHEBI:30616"/>
    </ligand>
</feature>
<protein>
    <recommendedName>
        <fullName evidence="1">Molybdenum import ATP-binding protein ModC</fullName>
        <ecNumber evidence="1">7.3.2.5</ecNumber>
    </recommendedName>
</protein>
<proteinExistence type="inferred from homology"/>
<dbReference type="EC" id="7.3.2.5" evidence="1"/>
<dbReference type="EMBL" id="BA000032">
    <property type="protein sequence ID" value="BAC62272.1"/>
    <property type="molecule type" value="Genomic_DNA"/>
</dbReference>
<dbReference type="RefSeq" id="NP_800439.1">
    <property type="nucleotide sequence ID" value="NC_004605.1"/>
</dbReference>
<dbReference type="RefSeq" id="WP_005479305.1">
    <property type="nucleotide sequence ID" value="NC_004605.1"/>
</dbReference>
<dbReference type="SMR" id="Q87HN4"/>
<dbReference type="GeneID" id="1191618"/>
<dbReference type="KEGG" id="vpa:VPA0929"/>
<dbReference type="PATRIC" id="fig|223926.6.peg.3860"/>
<dbReference type="eggNOG" id="COG4148">
    <property type="taxonomic scope" value="Bacteria"/>
</dbReference>
<dbReference type="HOGENOM" id="CLU_000604_1_1_6"/>
<dbReference type="Proteomes" id="UP000002493">
    <property type="component" value="Chromosome 2"/>
</dbReference>
<dbReference type="GO" id="GO:0005886">
    <property type="term" value="C:plasma membrane"/>
    <property type="evidence" value="ECO:0007669"/>
    <property type="project" value="UniProtKB-SubCell"/>
</dbReference>
<dbReference type="GO" id="GO:0015412">
    <property type="term" value="F:ABC-type molybdate transporter activity"/>
    <property type="evidence" value="ECO:0007669"/>
    <property type="project" value="UniProtKB-EC"/>
</dbReference>
<dbReference type="GO" id="GO:0005524">
    <property type="term" value="F:ATP binding"/>
    <property type="evidence" value="ECO:0007669"/>
    <property type="project" value="UniProtKB-KW"/>
</dbReference>
<dbReference type="GO" id="GO:0016887">
    <property type="term" value="F:ATP hydrolysis activity"/>
    <property type="evidence" value="ECO:0007669"/>
    <property type="project" value="InterPro"/>
</dbReference>
<dbReference type="FunFam" id="3.40.50.300:FF:000634">
    <property type="entry name" value="Molybdenum import ATP-binding protein ModC"/>
    <property type="match status" value="1"/>
</dbReference>
<dbReference type="Gene3D" id="2.40.50.100">
    <property type="match status" value="1"/>
</dbReference>
<dbReference type="Gene3D" id="3.40.50.300">
    <property type="entry name" value="P-loop containing nucleotide triphosphate hydrolases"/>
    <property type="match status" value="1"/>
</dbReference>
<dbReference type="InterPro" id="IPR003593">
    <property type="entry name" value="AAA+_ATPase"/>
</dbReference>
<dbReference type="InterPro" id="IPR003439">
    <property type="entry name" value="ABC_transporter-like_ATP-bd"/>
</dbReference>
<dbReference type="InterPro" id="IPR017871">
    <property type="entry name" value="ABC_transporter-like_CS"/>
</dbReference>
<dbReference type="InterPro" id="IPR008995">
    <property type="entry name" value="Mo/tungstate-bd_C_term_dom"/>
</dbReference>
<dbReference type="InterPro" id="IPR011868">
    <property type="entry name" value="ModC_ABC_ATP-bd"/>
</dbReference>
<dbReference type="InterPro" id="IPR050334">
    <property type="entry name" value="Molybdenum_import_ModC"/>
</dbReference>
<dbReference type="InterPro" id="IPR004606">
    <property type="entry name" value="Mop_domain"/>
</dbReference>
<dbReference type="InterPro" id="IPR027417">
    <property type="entry name" value="P-loop_NTPase"/>
</dbReference>
<dbReference type="InterPro" id="IPR005116">
    <property type="entry name" value="Transp-assoc_OB_typ1"/>
</dbReference>
<dbReference type="NCBIfam" id="TIGR02142">
    <property type="entry name" value="modC_ABC"/>
    <property type="match status" value="1"/>
</dbReference>
<dbReference type="NCBIfam" id="NF008355">
    <property type="entry name" value="PRK11144.1"/>
    <property type="match status" value="1"/>
</dbReference>
<dbReference type="PANTHER" id="PTHR43514">
    <property type="entry name" value="ABC TRANSPORTER I FAMILY MEMBER 10"/>
    <property type="match status" value="1"/>
</dbReference>
<dbReference type="PANTHER" id="PTHR43514:SF4">
    <property type="entry name" value="ABC TRANSPORTER I FAMILY MEMBER 10"/>
    <property type="match status" value="1"/>
</dbReference>
<dbReference type="Pfam" id="PF00005">
    <property type="entry name" value="ABC_tran"/>
    <property type="match status" value="1"/>
</dbReference>
<dbReference type="Pfam" id="PF03459">
    <property type="entry name" value="TOBE"/>
    <property type="match status" value="1"/>
</dbReference>
<dbReference type="SMART" id="SM00382">
    <property type="entry name" value="AAA"/>
    <property type="match status" value="1"/>
</dbReference>
<dbReference type="SUPFAM" id="SSF50331">
    <property type="entry name" value="MOP-like"/>
    <property type="match status" value="1"/>
</dbReference>
<dbReference type="SUPFAM" id="SSF52540">
    <property type="entry name" value="P-loop containing nucleoside triphosphate hydrolases"/>
    <property type="match status" value="1"/>
</dbReference>
<dbReference type="PROSITE" id="PS00211">
    <property type="entry name" value="ABC_TRANSPORTER_1"/>
    <property type="match status" value="1"/>
</dbReference>
<dbReference type="PROSITE" id="PS50893">
    <property type="entry name" value="ABC_TRANSPORTER_2"/>
    <property type="match status" value="1"/>
</dbReference>
<dbReference type="PROSITE" id="PS51241">
    <property type="entry name" value="MODC"/>
    <property type="match status" value="1"/>
</dbReference>
<dbReference type="PROSITE" id="PS51866">
    <property type="entry name" value="MOP"/>
    <property type="match status" value="1"/>
</dbReference>
<gene>
    <name evidence="1" type="primary">modC</name>
    <name type="ordered locus">VPA0929</name>
</gene>
<name>MODC_VIBPA</name>
<evidence type="ECO:0000255" key="1">
    <source>
        <dbReference type="HAMAP-Rule" id="MF_01705"/>
    </source>
</evidence>
<evidence type="ECO:0000255" key="2">
    <source>
        <dbReference type="PROSITE-ProRule" id="PRU01213"/>
    </source>
</evidence>
<reference key="1">
    <citation type="journal article" date="2003" name="Lancet">
        <title>Genome sequence of Vibrio parahaemolyticus: a pathogenic mechanism distinct from that of V. cholerae.</title>
        <authorList>
            <person name="Makino K."/>
            <person name="Oshima K."/>
            <person name="Kurokawa K."/>
            <person name="Yokoyama K."/>
            <person name="Uda T."/>
            <person name="Tagomori K."/>
            <person name="Iijima Y."/>
            <person name="Najima M."/>
            <person name="Nakano M."/>
            <person name="Yamashita A."/>
            <person name="Kubota Y."/>
            <person name="Kimura S."/>
            <person name="Yasunaga T."/>
            <person name="Honda T."/>
            <person name="Shinagawa H."/>
            <person name="Hattori M."/>
            <person name="Iida T."/>
        </authorList>
    </citation>
    <scope>NUCLEOTIDE SEQUENCE [LARGE SCALE GENOMIC DNA]</scope>
    <source>
        <strain>RIMD 2210633</strain>
    </source>
</reference>